<keyword id="KW-0687">Ribonucleoprotein</keyword>
<keyword id="KW-0689">Ribosomal protein</keyword>
<organism>
    <name type="scientific">Staphylococcus aureus (strain JH9)</name>
    <dbReference type="NCBI Taxonomy" id="359786"/>
    <lineage>
        <taxon>Bacteria</taxon>
        <taxon>Bacillati</taxon>
        <taxon>Bacillota</taxon>
        <taxon>Bacilli</taxon>
        <taxon>Bacillales</taxon>
        <taxon>Staphylococcaceae</taxon>
        <taxon>Staphylococcus</taxon>
    </lineage>
</organism>
<gene>
    <name evidence="1" type="primary">rpmI</name>
    <name type="ordered locus">SaurJH9_1737</name>
</gene>
<proteinExistence type="inferred from homology"/>
<feature type="chain" id="PRO_1000081632" description="Large ribosomal subunit protein bL35">
    <location>
        <begin position="1"/>
        <end position="66"/>
    </location>
</feature>
<feature type="region of interest" description="Disordered" evidence="2">
    <location>
        <begin position="1"/>
        <end position="49"/>
    </location>
</feature>
<feature type="compositionally biased region" description="Basic residues" evidence="2">
    <location>
        <begin position="1"/>
        <end position="16"/>
    </location>
</feature>
<feature type="compositionally biased region" description="Basic residues" evidence="2">
    <location>
        <begin position="38"/>
        <end position="49"/>
    </location>
</feature>
<sequence>MPKMKTHRGAAKRVKRTASGQLKRSRAFTSHLFANKSTKQKRQLRKARLVSKSDMKRVKQLLAYKK</sequence>
<reference key="1">
    <citation type="submission" date="2007-05" db="EMBL/GenBank/DDBJ databases">
        <title>Complete sequence of chromosome of Staphylococcus aureus subsp. aureus JH9.</title>
        <authorList>
            <consortium name="US DOE Joint Genome Institute"/>
            <person name="Copeland A."/>
            <person name="Lucas S."/>
            <person name="Lapidus A."/>
            <person name="Barry K."/>
            <person name="Detter J.C."/>
            <person name="Glavina del Rio T."/>
            <person name="Hammon N."/>
            <person name="Israni S."/>
            <person name="Pitluck S."/>
            <person name="Chain P."/>
            <person name="Malfatti S."/>
            <person name="Shin M."/>
            <person name="Vergez L."/>
            <person name="Schmutz J."/>
            <person name="Larimer F."/>
            <person name="Land M."/>
            <person name="Hauser L."/>
            <person name="Kyrpides N."/>
            <person name="Kim E."/>
            <person name="Tomasz A."/>
            <person name="Richardson P."/>
        </authorList>
    </citation>
    <scope>NUCLEOTIDE SEQUENCE [LARGE SCALE GENOMIC DNA]</scope>
    <source>
        <strain>JH9</strain>
    </source>
</reference>
<comment type="similarity">
    <text evidence="1">Belongs to the bacterial ribosomal protein bL35 family.</text>
</comment>
<accession>A5ITK4</accession>
<evidence type="ECO:0000255" key="1">
    <source>
        <dbReference type="HAMAP-Rule" id="MF_00514"/>
    </source>
</evidence>
<evidence type="ECO:0000256" key="2">
    <source>
        <dbReference type="SAM" id="MobiDB-lite"/>
    </source>
</evidence>
<evidence type="ECO:0000305" key="3"/>
<name>RL35_STAA9</name>
<protein>
    <recommendedName>
        <fullName evidence="1">Large ribosomal subunit protein bL35</fullName>
    </recommendedName>
    <alternativeName>
        <fullName evidence="3">50S ribosomal protein L35</fullName>
    </alternativeName>
</protein>
<dbReference type="EMBL" id="CP000703">
    <property type="protein sequence ID" value="ABQ49527.1"/>
    <property type="molecule type" value="Genomic_DNA"/>
</dbReference>
<dbReference type="RefSeq" id="WP_001125540.1">
    <property type="nucleotide sequence ID" value="NC_009487.1"/>
</dbReference>
<dbReference type="SMR" id="A5ITK4"/>
<dbReference type="GeneID" id="98346041"/>
<dbReference type="KEGG" id="saj:SaurJH9_1737"/>
<dbReference type="HOGENOM" id="CLU_169643_3_0_9"/>
<dbReference type="GO" id="GO:0022625">
    <property type="term" value="C:cytosolic large ribosomal subunit"/>
    <property type="evidence" value="ECO:0007669"/>
    <property type="project" value="TreeGrafter"/>
</dbReference>
<dbReference type="GO" id="GO:0003735">
    <property type="term" value="F:structural constituent of ribosome"/>
    <property type="evidence" value="ECO:0007669"/>
    <property type="project" value="InterPro"/>
</dbReference>
<dbReference type="GO" id="GO:0006412">
    <property type="term" value="P:translation"/>
    <property type="evidence" value="ECO:0007669"/>
    <property type="project" value="UniProtKB-UniRule"/>
</dbReference>
<dbReference type="FunFam" id="4.10.410.60:FF:000001">
    <property type="entry name" value="50S ribosomal protein L35"/>
    <property type="match status" value="1"/>
</dbReference>
<dbReference type="Gene3D" id="4.10.410.60">
    <property type="match status" value="1"/>
</dbReference>
<dbReference type="HAMAP" id="MF_00514">
    <property type="entry name" value="Ribosomal_bL35"/>
    <property type="match status" value="1"/>
</dbReference>
<dbReference type="InterPro" id="IPR001706">
    <property type="entry name" value="Ribosomal_bL35"/>
</dbReference>
<dbReference type="InterPro" id="IPR021137">
    <property type="entry name" value="Ribosomal_bL35-like"/>
</dbReference>
<dbReference type="InterPro" id="IPR018265">
    <property type="entry name" value="Ribosomal_bL35_CS"/>
</dbReference>
<dbReference type="InterPro" id="IPR037229">
    <property type="entry name" value="Ribosomal_bL35_sf"/>
</dbReference>
<dbReference type="NCBIfam" id="TIGR00001">
    <property type="entry name" value="rpmI_bact"/>
    <property type="match status" value="1"/>
</dbReference>
<dbReference type="PANTHER" id="PTHR33343">
    <property type="entry name" value="54S RIBOSOMAL PROTEIN BL35M"/>
    <property type="match status" value="1"/>
</dbReference>
<dbReference type="PANTHER" id="PTHR33343:SF1">
    <property type="entry name" value="LARGE RIBOSOMAL SUBUNIT PROTEIN BL35M"/>
    <property type="match status" value="1"/>
</dbReference>
<dbReference type="Pfam" id="PF01632">
    <property type="entry name" value="Ribosomal_L35p"/>
    <property type="match status" value="1"/>
</dbReference>
<dbReference type="PRINTS" id="PR00064">
    <property type="entry name" value="RIBOSOMALL35"/>
</dbReference>
<dbReference type="SUPFAM" id="SSF143034">
    <property type="entry name" value="L35p-like"/>
    <property type="match status" value="1"/>
</dbReference>
<dbReference type="PROSITE" id="PS00936">
    <property type="entry name" value="RIBOSOMAL_L35"/>
    <property type="match status" value="1"/>
</dbReference>